<evidence type="ECO:0000250" key="1">
    <source>
        <dbReference type="UniProtKB" id="Q7Z628"/>
    </source>
</evidence>
<evidence type="ECO:0000255" key="2">
    <source>
        <dbReference type="PROSITE-ProRule" id="PRU00062"/>
    </source>
</evidence>
<evidence type="ECO:0000255" key="3">
    <source>
        <dbReference type="PROSITE-ProRule" id="PRU00145"/>
    </source>
</evidence>
<evidence type="ECO:0000256" key="4">
    <source>
        <dbReference type="SAM" id="MobiDB-lite"/>
    </source>
</evidence>
<evidence type="ECO:0000269" key="5">
    <source>
    </source>
</evidence>
<evidence type="ECO:0000269" key="6">
    <source>
    </source>
</evidence>
<evidence type="ECO:0000269" key="7">
    <source>
    </source>
</evidence>
<evidence type="ECO:0000269" key="8">
    <source>
    </source>
</evidence>
<evidence type="ECO:0000303" key="9">
    <source>
    </source>
</evidence>
<evidence type="ECO:0000303" key="10">
    <source>
    </source>
</evidence>
<evidence type="ECO:0000303" key="11">
    <source ref="2"/>
</evidence>
<evidence type="ECO:0000305" key="12"/>
<evidence type="ECO:0007744" key="13">
    <source>
    </source>
</evidence>
<accession>Q9Z206</accession>
<accession>Q8C4I0</accession>
<accession>Q9Z1L7</accession>
<reference key="1">
    <citation type="journal article" date="1998" name="EMBO J.">
        <title>Activation of RhoA and SAPK/JNK signalling pathways by the RhoA-specific exchange factor mNET1.</title>
        <authorList>
            <person name="Alberts A.S."/>
            <person name="Treisman R."/>
        </authorList>
    </citation>
    <scope>NUCLEOTIDE SEQUENCE [MRNA] (ISOFORM 1)</scope>
    <scope>FUNCTION</scope>
    <scope>MUTAGENESIS OF LEU-321 AND TRP-492</scope>
</reference>
<reference key="2">
    <citation type="submission" date="1998-08" db="EMBL/GenBank/DDBJ databases">
        <title>NET1A: a new transforming splice-varriant of the Rho guanine nucleotide-exchange factor NET1.</title>
        <authorList>
            <person name="Wempe F."/>
            <person name="Nigro S."/>
            <person name="Melchner H."/>
        </authorList>
    </citation>
    <scope>NUCLEOTIDE SEQUENCE [MRNA] (ISOFORM 2)</scope>
</reference>
<reference key="3">
    <citation type="journal article" date="2005" name="Science">
        <title>The transcriptional landscape of the mammalian genome.</title>
        <authorList>
            <person name="Carninci P."/>
            <person name="Kasukawa T."/>
            <person name="Katayama S."/>
            <person name="Gough J."/>
            <person name="Frith M.C."/>
            <person name="Maeda N."/>
            <person name="Oyama R."/>
            <person name="Ravasi T."/>
            <person name="Lenhard B."/>
            <person name="Wells C."/>
            <person name="Kodzius R."/>
            <person name="Shimokawa K."/>
            <person name="Bajic V.B."/>
            <person name="Brenner S.E."/>
            <person name="Batalov S."/>
            <person name="Forrest A.R."/>
            <person name="Zavolan M."/>
            <person name="Davis M.J."/>
            <person name="Wilming L.G."/>
            <person name="Aidinis V."/>
            <person name="Allen J.E."/>
            <person name="Ambesi-Impiombato A."/>
            <person name="Apweiler R."/>
            <person name="Aturaliya R.N."/>
            <person name="Bailey T.L."/>
            <person name="Bansal M."/>
            <person name="Baxter L."/>
            <person name="Beisel K.W."/>
            <person name="Bersano T."/>
            <person name="Bono H."/>
            <person name="Chalk A.M."/>
            <person name="Chiu K.P."/>
            <person name="Choudhary V."/>
            <person name="Christoffels A."/>
            <person name="Clutterbuck D.R."/>
            <person name="Crowe M.L."/>
            <person name="Dalla E."/>
            <person name="Dalrymple B.P."/>
            <person name="de Bono B."/>
            <person name="Della Gatta G."/>
            <person name="di Bernardo D."/>
            <person name="Down T."/>
            <person name="Engstrom P."/>
            <person name="Fagiolini M."/>
            <person name="Faulkner G."/>
            <person name="Fletcher C.F."/>
            <person name="Fukushima T."/>
            <person name="Furuno M."/>
            <person name="Futaki S."/>
            <person name="Gariboldi M."/>
            <person name="Georgii-Hemming P."/>
            <person name="Gingeras T.R."/>
            <person name="Gojobori T."/>
            <person name="Green R.E."/>
            <person name="Gustincich S."/>
            <person name="Harbers M."/>
            <person name="Hayashi Y."/>
            <person name="Hensch T.K."/>
            <person name="Hirokawa N."/>
            <person name="Hill D."/>
            <person name="Huminiecki L."/>
            <person name="Iacono M."/>
            <person name="Ikeo K."/>
            <person name="Iwama A."/>
            <person name="Ishikawa T."/>
            <person name="Jakt M."/>
            <person name="Kanapin A."/>
            <person name="Katoh M."/>
            <person name="Kawasawa Y."/>
            <person name="Kelso J."/>
            <person name="Kitamura H."/>
            <person name="Kitano H."/>
            <person name="Kollias G."/>
            <person name="Krishnan S.P."/>
            <person name="Kruger A."/>
            <person name="Kummerfeld S.K."/>
            <person name="Kurochkin I.V."/>
            <person name="Lareau L.F."/>
            <person name="Lazarevic D."/>
            <person name="Lipovich L."/>
            <person name="Liu J."/>
            <person name="Liuni S."/>
            <person name="McWilliam S."/>
            <person name="Madan Babu M."/>
            <person name="Madera M."/>
            <person name="Marchionni L."/>
            <person name="Matsuda H."/>
            <person name="Matsuzawa S."/>
            <person name="Miki H."/>
            <person name="Mignone F."/>
            <person name="Miyake S."/>
            <person name="Morris K."/>
            <person name="Mottagui-Tabar S."/>
            <person name="Mulder N."/>
            <person name="Nakano N."/>
            <person name="Nakauchi H."/>
            <person name="Ng P."/>
            <person name="Nilsson R."/>
            <person name="Nishiguchi S."/>
            <person name="Nishikawa S."/>
            <person name="Nori F."/>
            <person name="Ohara O."/>
            <person name="Okazaki Y."/>
            <person name="Orlando V."/>
            <person name="Pang K.C."/>
            <person name="Pavan W.J."/>
            <person name="Pavesi G."/>
            <person name="Pesole G."/>
            <person name="Petrovsky N."/>
            <person name="Piazza S."/>
            <person name="Reed J."/>
            <person name="Reid J.F."/>
            <person name="Ring B.Z."/>
            <person name="Ringwald M."/>
            <person name="Rost B."/>
            <person name="Ruan Y."/>
            <person name="Salzberg S.L."/>
            <person name="Sandelin A."/>
            <person name="Schneider C."/>
            <person name="Schoenbach C."/>
            <person name="Sekiguchi K."/>
            <person name="Semple C.A."/>
            <person name="Seno S."/>
            <person name="Sessa L."/>
            <person name="Sheng Y."/>
            <person name="Shibata Y."/>
            <person name="Shimada H."/>
            <person name="Shimada K."/>
            <person name="Silva D."/>
            <person name="Sinclair B."/>
            <person name="Sperling S."/>
            <person name="Stupka E."/>
            <person name="Sugiura K."/>
            <person name="Sultana R."/>
            <person name="Takenaka Y."/>
            <person name="Taki K."/>
            <person name="Tammoja K."/>
            <person name="Tan S.L."/>
            <person name="Tang S."/>
            <person name="Taylor M.S."/>
            <person name="Tegner J."/>
            <person name="Teichmann S.A."/>
            <person name="Ueda H.R."/>
            <person name="van Nimwegen E."/>
            <person name="Verardo R."/>
            <person name="Wei C.L."/>
            <person name="Yagi K."/>
            <person name="Yamanishi H."/>
            <person name="Zabarovsky E."/>
            <person name="Zhu S."/>
            <person name="Zimmer A."/>
            <person name="Hide W."/>
            <person name="Bult C."/>
            <person name="Grimmond S.M."/>
            <person name="Teasdale R.D."/>
            <person name="Liu E.T."/>
            <person name="Brusic V."/>
            <person name="Quackenbush J."/>
            <person name="Wahlestedt C."/>
            <person name="Mattick J.S."/>
            <person name="Hume D.A."/>
            <person name="Kai C."/>
            <person name="Sasaki D."/>
            <person name="Tomaru Y."/>
            <person name="Fukuda S."/>
            <person name="Kanamori-Katayama M."/>
            <person name="Suzuki M."/>
            <person name="Aoki J."/>
            <person name="Arakawa T."/>
            <person name="Iida J."/>
            <person name="Imamura K."/>
            <person name="Itoh M."/>
            <person name="Kato T."/>
            <person name="Kawaji H."/>
            <person name="Kawagashira N."/>
            <person name="Kawashima T."/>
            <person name="Kojima M."/>
            <person name="Kondo S."/>
            <person name="Konno H."/>
            <person name="Nakano K."/>
            <person name="Ninomiya N."/>
            <person name="Nishio T."/>
            <person name="Okada M."/>
            <person name="Plessy C."/>
            <person name="Shibata K."/>
            <person name="Shiraki T."/>
            <person name="Suzuki S."/>
            <person name="Tagami M."/>
            <person name="Waki K."/>
            <person name="Watahiki A."/>
            <person name="Okamura-Oho Y."/>
            <person name="Suzuki H."/>
            <person name="Kawai J."/>
            <person name="Hayashizaki Y."/>
        </authorList>
    </citation>
    <scope>NUCLEOTIDE SEQUENCE [LARGE SCALE MRNA] (ISOFORM 2)</scope>
    <source>
        <strain>C57BL/6J</strain>
        <strain>NOD</strain>
        <tissue>Cerebellum</tissue>
        <tissue>Thymus</tissue>
    </source>
</reference>
<reference key="4">
    <citation type="journal article" date="2004" name="Genome Res.">
        <title>The status, quality, and expansion of the NIH full-length cDNA project: the Mammalian Gene Collection (MGC).</title>
        <authorList>
            <consortium name="The MGC Project Team"/>
        </authorList>
    </citation>
    <scope>NUCLEOTIDE SEQUENCE [LARGE SCALE MRNA] (ISOFORM 2)</scope>
    <source>
        <strain>FVB/N</strain>
        <tissue>Mammary tumor</tissue>
    </source>
</reference>
<reference key="5">
    <citation type="journal article" date="1998" name="J. Biol. Chem.">
        <title>Analysis of RhoA-binding proteins reveals an interaction domain conserved in heterotrimeric G protein beta subunits and the yeast response regulator protein Skn7.</title>
        <authorList>
            <person name="Alberts A.S."/>
            <person name="Bouquin N."/>
            <person name="Johnston L.H."/>
            <person name="Treisman R."/>
        </authorList>
    </citation>
    <scope>INTERACTION WITH RHOA AND CDC42</scope>
</reference>
<reference key="6">
    <citation type="journal article" date="2001" name="Biochem. Biophys. Res. Commun.">
        <title>Identification of mNET1 as a candidate ligand for the first PDZ domain of MAGI-1.</title>
        <authorList>
            <person name="Dobrosotskaya I.Y."/>
        </authorList>
    </citation>
    <scope>INTERACTION WITH BAIAP1</scope>
</reference>
<reference key="7">
    <citation type="journal article" date="2002" name="J. Biol. Chem.">
        <title>The Rho exchange factor Net1 is regulated by nuclear sequestration.</title>
        <authorList>
            <person name="Schmidt A."/>
            <person name="Hall A."/>
        </authorList>
    </citation>
    <scope>SUBCELLULAR LOCATION</scope>
    <scope>MUTAGENESIS OF 12-ARG--ARG-16 AND 67-ARG--ARG-70</scope>
</reference>
<reference key="8">
    <citation type="journal article" date="2009" name="Immunity">
        <title>The phagosomal proteome in interferon-gamma-activated macrophages.</title>
        <authorList>
            <person name="Trost M."/>
            <person name="English L."/>
            <person name="Lemieux S."/>
            <person name="Courcelles M."/>
            <person name="Desjardins M."/>
            <person name="Thibault P."/>
        </authorList>
    </citation>
    <scope>PHOSPHORYLATION [LARGE SCALE ANALYSIS] AT SER-508</scope>
    <scope>IDENTIFICATION BY MASS SPECTROMETRY [LARGE SCALE ANALYSIS]</scope>
</reference>
<organism>
    <name type="scientific">Mus musculus</name>
    <name type="common">Mouse</name>
    <dbReference type="NCBI Taxonomy" id="10090"/>
    <lineage>
        <taxon>Eukaryota</taxon>
        <taxon>Metazoa</taxon>
        <taxon>Chordata</taxon>
        <taxon>Craniata</taxon>
        <taxon>Vertebrata</taxon>
        <taxon>Euteleostomi</taxon>
        <taxon>Mammalia</taxon>
        <taxon>Eutheria</taxon>
        <taxon>Euarchontoglires</taxon>
        <taxon>Glires</taxon>
        <taxon>Rodentia</taxon>
        <taxon>Myomorpha</taxon>
        <taxon>Muroidea</taxon>
        <taxon>Muridae</taxon>
        <taxon>Murinae</taxon>
        <taxon>Mus</taxon>
        <taxon>Mus</taxon>
    </lineage>
</organism>
<dbReference type="EMBL" id="AF094520">
    <property type="protein sequence ID" value="AAC71772.1"/>
    <property type="molecule type" value="mRNA"/>
</dbReference>
<dbReference type="EMBL" id="AJ010045">
    <property type="protein sequence ID" value="CAA08973.1"/>
    <property type="molecule type" value="mRNA"/>
</dbReference>
<dbReference type="EMBL" id="AK082128">
    <property type="protein sequence ID" value="BAC38417.1"/>
    <property type="molecule type" value="mRNA"/>
</dbReference>
<dbReference type="EMBL" id="AK088632">
    <property type="protein sequence ID" value="BAC40466.1"/>
    <property type="molecule type" value="mRNA"/>
</dbReference>
<dbReference type="EMBL" id="BC004699">
    <property type="protein sequence ID" value="AAH04699.1"/>
    <property type="molecule type" value="mRNA"/>
</dbReference>
<dbReference type="CCDS" id="CCDS26216.1">
    <molecule id="Q9Z206-1"/>
</dbReference>
<dbReference type="CCDS" id="CCDS36583.1">
    <molecule id="Q9Z206-2"/>
</dbReference>
<dbReference type="RefSeq" id="NP_001040624.1">
    <molecule id="Q9Z206-2"/>
    <property type="nucleotide sequence ID" value="NM_001047159.2"/>
</dbReference>
<dbReference type="RefSeq" id="NP_062645.2">
    <molecule id="Q9Z206-1"/>
    <property type="nucleotide sequence ID" value="NM_019671.3"/>
</dbReference>
<dbReference type="SMR" id="Q9Z206"/>
<dbReference type="BioGRID" id="207915">
    <property type="interactions" value="17"/>
</dbReference>
<dbReference type="FunCoup" id="Q9Z206">
    <property type="interactions" value="337"/>
</dbReference>
<dbReference type="IntAct" id="Q9Z206">
    <property type="interactions" value="1"/>
</dbReference>
<dbReference type="MINT" id="Q9Z206"/>
<dbReference type="STRING" id="10090.ENSMUSP00000089464"/>
<dbReference type="iPTMnet" id="Q9Z206"/>
<dbReference type="PhosphoSitePlus" id="Q9Z206"/>
<dbReference type="jPOST" id="Q9Z206"/>
<dbReference type="PaxDb" id="10090-ENSMUSP00000089464"/>
<dbReference type="ProteomicsDB" id="283264">
    <molecule id="Q9Z206-1"/>
</dbReference>
<dbReference type="ProteomicsDB" id="283265">
    <molecule id="Q9Z206-2"/>
</dbReference>
<dbReference type="Antibodypedia" id="10610">
    <property type="antibodies" value="403 antibodies from 35 providers"/>
</dbReference>
<dbReference type="DNASU" id="56349"/>
<dbReference type="Ensembl" id="ENSMUST00000091853.12">
    <molecule id="Q9Z206-1"/>
    <property type="protein sequence ID" value="ENSMUSP00000089464.5"/>
    <property type="gene ID" value="ENSMUSG00000021215.16"/>
</dbReference>
<dbReference type="Ensembl" id="ENSMUST00000099946.6">
    <molecule id="Q9Z206-2"/>
    <property type="protein sequence ID" value="ENSMUSP00000097529.5"/>
    <property type="gene ID" value="ENSMUSG00000021215.16"/>
</dbReference>
<dbReference type="GeneID" id="56349"/>
<dbReference type="KEGG" id="mmu:56349"/>
<dbReference type="UCSC" id="uc007pje.3">
    <molecule id="Q9Z206-1"/>
    <property type="organism name" value="mouse"/>
</dbReference>
<dbReference type="AGR" id="MGI:1927138"/>
<dbReference type="CTD" id="10276"/>
<dbReference type="MGI" id="MGI:1927138">
    <property type="gene designation" value="Net1"/>
</dbReference>
<dbReference type="VEuPathDB" id="HostDB:ENSMUSG00000021215"/>
<dbReference type="eggNOG" id="KOG4305">
    <property type="taxonomic scope" value="Eukaryota"/>
</dbReference>
<dbReference type="GeneTree" id="ENSGT00940000155849"/>
<dbReference type="HOGENOM" id="CLU_027428_2_0_1"/>
<dbReference type="InParanoid" id="Q9Z206"/>
<dbReference type="OMA" id="ECGENDP"/>
<dbReference type="OrthoDB" id="1716625at2759"/>
<dbReference type="PhylomeDB" id="Q9Z206"/>
<dbReference type="TreeFam" id="TF328974"/>
<dbReference type="Reactome" id="R-MMU-193648">
    <property type="pathway name" value="NRAGE signals death through JNK"/>
</dbReference>
<dbReference type="Reactome" id="R-MMU-416482">
    <property type="pathway name" value="G alpha (12/13) signalling events"/>
</dbReference>
<dbReference type="Reactome" id="R-MMU-8980692">
    <property type="pathway name" value="RHOA GTPase cycle"/>
</dbReference>
<dbReference type="Reactome" id="R-MMU-9013026">
    <property type="pathway name" value="RHOB GTPase cycle"/>
</dbReference>
<dbReference type="BioGRID-ORCS" id="56349">
    <property type="hits" value="2 hits in 75 CRISPR screens"/>
</dbReference>
<dbReference type="ChiTaRS" id="Net1">
    <property type="organism name" value="mouse"/>
</dbReference>
<dbReference type="PRO" id="PR:Q9Z206"/>
<dbReference type="Proteomes" id="UP000000589">
    <property type="component" value="Chromosome 13"/>
</dbReference>
<dbReference type="RNAct" id="Q9Z206">
    <property type="molecule type" value="protein"/>
</dbReference>
<dbReference type="Bgee" id="ENSMUSG00000021215">
    <property type="expression patterns" value="Expressed in epithelium of small intestine and 194 other cell types or tissues"/>
</dbReference>
<dbReference type="ExpressionAtlas" id="Q9Z206">
    <property type="expression patterns" value="baseline and differential"/>
</dbReference>
<dbReference type="GO" id="GO:0005737">
    <property type="term" value="C:cytoplasm"/>
    <property type="evidence" value="ECO:0007669"/>
    <property type="project" value="UniProtKB-SubCell"/>
</dbReference>
<dbReference type="GO" id="GO:0005634">
    <property type="term" value="C:nucleus"/>
    <property type="evidence" value="ECO:0000314"/>
    <property type="project" value="MGI"/>
</dbReference>
<dbReference type="GO" id="GO:0005886">
    <property type="term" value="C:plasma membrane"/>
    <property type="evidence" value="ECO:0000314"/>
    <property type="project" value="MGI"/>
</dbReference>
<dbReference type="GO" id="GO:0005085">
    <property type="term" value="F:guanyl-nucleotide exchange factor activity"/>
    <property type="evidence" value="ECO:0007669"/>
    <property type="project" value="UniProtKB-KW"/>
</dbReference>
<dbReference type="GO" id="GO:0031267">
    <property type="term" value="F:small GTPase binding"/>
    <property type="evidence" value="ECO:0000314"/>
    <property type="project" value="MGI"/>
</dbReference>
<dbReference type="GO" id="GO:0070301">
    <property type="term" value="P:cellular response to hydrogen peroxide"/>
    <property type="evidence" value="ECO:0000250"/>
    <property type="project" value="UniProtKB"/>
</dbReference>
<dbReference type="GO" id="GO:0071479">
    <property type="term" value="P:cellular response to ionizing radiation"/>
    <property type="evidence" value="ECO:0000250"/>
    <property type="project" value="UniProtKB"/>
</dbReference>
<dbReference type="GO" id="GO:0035556">
    <property type="term" value="P:intracellular signal transduction"/>
    <property type="evidence" value="ECO:0007669"/>
    <property type="project" value="InterPro"/>
</dbReference>
<dbReference type="GO" id="GO:0051451">
    <property type="term" value="P:myoblast migration"/>
    <property type="evidence" value="ECO:0000316"/>
    <property type="project" value="MGI"/>
</dbReference>
<dbReference type="GO" id="GO:0043065">
    <property type="term" value="P:positive regulation of apoptotic process"/>
    <property type="evidence" value="ECO:0000250"/>
    <property type="project" value="UniProtKB"/>
</dbReference>
<dbReference type="GO" id="GO:0043547">
    <property type="term" value="P:positive regulation of GTPase activity"/>
    <property type="evidence" value="ECO:0000250"/>
    <property type="project" value="UniProtKB"/>
</dbReference>
<dbReference type="GO" id="GO:1900026">
    <property type="term" value="P:positive regulation of substrate adhesion-dependent cell spreading"/>
    <property type="evidence" value="ECO:0000314"/>
    <property type="project" value="MGI"/>
</dbReference>
<dbReference type="CDD" id="cd13224">
    <property type="entry name" value="PH_Net1"/>
    <property type="match status" value="1"/>
</dbReference>
<dbReference type="CDD" id="cd00160">
    <property type="entry name" value="RhoGEF"/>
    <property type="match status" value="1"/>
</dbReference>
<dbReference type="FunFam" id="2.30.29.30:FF:000151">
    <property type="entry name" value="Rho guanine nucleotide exchange factor 3"/>
    <property type="match status" value="1"/>
</dbReference>
<dbReference type="FunFam" id="1.20.900.10:FF:000010">
    <property type="entry name" value="Rho guanine nucleotide exchange factor 3 isoform 1"/>
    <property type="match status" value="1"/>
</dbReference>
<dbReference type="Gene3D" id="1.20.900.10">
    <property type="entry name" value="Dbl homology (DH) domain"/>
    <property type="match status" value="1"/>
</dbReference>
<dbReference type="Gene3D" id="2.30.29.30">
    <property type="entry name" value="Pleckstrin-homology domain (PH domain)/Phosphotyrosine-binding domain (PTB)"/>
    <property type="match status" value="1"/>
</dbReference>
<dbReference type="InterPro" id="IPR035899">
    <property type="entry name" value="DBL_dom_sf"/>
</dbReference>
<dbReference type="InterPro" id="IPR000219">
    <property type="entry name" value="DH_dom"/>
</dbReference>
<dbReference type="InterPro" id="IPR051480">
    <property type="entry name" value="Endocytic_GEF_Adapter"/>
</dbReference>
<dbReference type="InterPro" id="IPR001331">
    <property type="entry name" value="GDS_CDC24_CS"/>
</dbReference>
<dbReference type="InterPro" id="IPR037853">
    <property type="entry name" value="Net1_PH"/>
</dbReference>
<dbReference type="InterPro" id="IPR011993">
    <property type="entry name" value="PH-like_dom_sf"/>
</dbReference>
<dbReference type="InterPro" id="IPR001849">
    <property type="entry name" value="PH_domain"/>
</dbReference>
<dbReference type="InterPro" id="IPR055251">
    <property type="entry name" value="SOS1_NGEF_PH"/>
</dbReference>
<dbReference type="PANTHER" id="PTHR46006:SF4">
    <property type="entry name" value="NEUROEPITHELIAL CELL-TRANSFORMING GENE 1 PROTEIN"/>
    <property type="match status" value="1"/>
</dbReference>
<dbReference type="PANTHER" id="PTHR46006">
    <property type="entry name" value="RHO GUANINE NUCLEOTIDE EXCHANGE FACTOR AT 64C, ISOFORM A"/>
    <property type="match status" value="1"/>
</dbReference>
<dbReference type="Pfam" id="PF00621">
    <property type="entry name" value="RhoGEF"/>
    <property type="match status" value="1"/>
</dbReference>
<dbReference type="Pfam" id="PF22697">
    <property type="entry name" value="SOS1_NGEF_PH"/>
    <property type="match status" value="1"/>
</dbReference>
<dbReference type="SMART" id="SM00233">
    <property type="entry name" value="PH"/>
    <property type="match status" value="1"/>
</dbReference>
<dbReference type="SMART" id="SM00325">
    <property type="entry name" value="RhoGEF"/>
    <property type="match status" value="1"/>
</dbReference>
<dbReference type="SUPFAM" id="SSF48065">
    <property type="entry name" value="DBL homology domain (DH-domain)"/>
    <property type="match status" value="1"/>
</dbReference>
<dbReference type="SUPFAM" id="SSF50729">
    <property type="entry name" value="PH domain-like"/>
    <property type="match status" value="1"/>
</dbReference>
<dbReference type="PROSITE" id="PS00741">
    <property type="entry name" value="DH_1"/>
    <property type="match status" value="1"/>
</dbReference>
<dbReference type="PROSITE" id="PS50010">
    <property type="entry name" value="DH_2"/>
    <property type="match status" value="1"/>
</dbReference>
<dbReference type="PROSITE" id="PS50003">
    <property type="entry name" value="PH_DOMAIN"/>
    <property type="match status" value="1"/>
</dbReference>
<comment type="function">
    <text evidence="8">Acts as a guanine nucleotide exchange factor (GEF) for RhoA GTPase. May be involved in activation of the SAPK/JNK pathway. Stimulates genotoxic stress-induced RHOB activity in breast cancer cells leading to their cell death.</text>
</comment>
<comment type="subunit">
    <text evidence="5 7">Interacts with RHOA in its GTP- and GDP-bound states, and with CDC42 in its GTP-bound state. Interacts with the PDZ 1 domain of BAIAP1.</text>
</comment>
<comment type="interaction">
    <interactant intactId="EBI-7840997">
        <id>Q9Z206</id>
    </interactant>
    <interactant intactId="EBI-7440897">
        <id>Q6RHR9</id>
        <label>Magi1</label>
    </interactant>
    <organismsDiffer>false</organismsDiffer>
    <experiments>6</experiments>
</comment>
<comment type="subcellular location">
    <subcellularLocation>
        <location evidence="6">Cytoplasm</location>
    </subcellularLocation>
    <subcellularLocation>
        <location evidence="6">Nucleus</location>
    </subcellularLocation>
</comment>
<comment type="alternative products">
    <event type="alternative splicing"/>
    <isoform>
        <id>Q9Z206-1</id>
        <name>1</name>
        <sequence type="displayed"/>
    </isoform>
    <isoform>
        <id>Q9Z206-2</id>
        <name>2</name>
        <name>Net1a</name>
        <sequence type="described" ref="VSP_011622 VSP_011623"/>
    </isoform>
</comment>
<comment type="domain">
    <text>The PH domain is sufficient for the nuclear export of the oncogenic N-terminal truncated form. The relocalization is not affected by the Leu-492 mutation.</text>
</comment>
<comment type="miscellaneous">
    <text>Can be converted to an oncogenic protein by N-terminal deletion that leads to nuclear export and cytoplasmic localization. Transformation seems to require the activity of multiple signaling pathways. The physiological conditions for cytoplasmic relocalization are not known yet.</text>
</comment>
<feature type="chain" id="PRO_0000080925" description="Neuroepithelial cell-transforming gene 1 protein">
    <location>
        <begin position="1"/>
        <end position="595"/>
    </location>
</feature>
<feature type="domain" description="DH" evidence="2">
    <location>
        <begin position="174"/>
        <end position="356"/>
    </location>
</feature>
<feature type="domain" description="PH" evidence="3">
    <location>
        <begin position="386"/>
        <end position="501"/>
    </location>
</feature>
<feature type="region of interest" description="Necessary for nuclear localization">
    <location>
        <begin position="1"/>
        <end position="74"/>
    </location>
</feature>
<feature type="region of interest" description="Disordered" evidence="4">
    <location>
        <begin position="1"/>
        <end position="42"/>
    </location>
</feature>
<feature type="region of interest" description="Disordered" evidence="4">
    <location>
        <begin position="127"/>
        <end position="151"/>
    </location>
</feature>
<feature type="region of interest" description="Disordered" evidence="4">
    <location>
        <begin position="555"/>
        <end position="595"/>
    </location>
</feature>
<feature type="short sequence motif" description="Nuclear localization signal">
    <location>
        <begin position="12"/>
        <end position="19"/>
    </location>
</feature>
<feature type="short sequence motif" description="Nuclear localization signal">
    <location>
        <begin position="66"/>
        <end position="72"/>
    </location>
</feature>
<feature type="compositionally biased region" description="Polar residues" evidence="4">
    <location>
        <begin position="133"/>
        <end position="146"/>
    </location>
</feature>
<feature type="modified residue" description="N-acetylmethionine" evidence="1">
    <location>
        <position position="1"/>
    </location>
</feature>
<feature type="modified residue" description="Phosphoserine" evidence="1">
    <location>
        <position position="21"/>
    </location>
</feature>
<feature type="modified residue" description="Phosphoserine" evidence="1">
    <location>
        <position position="100"/>
    </location>
</feature>
<feature type="modified residue" description="Phosphoserine" evidence="1">
    <location>
        <position position="106"/>
    </location>
</feature>
<feature type="modified residue" description="Phosphoserine" evidence="1">
    <location>
        <position position="122"/>
    </location>
</feature>
<feature type="modified residue" description="Phosphoserine" evidence="13">
    <location>
        <position position="508"/>
    </location>
</feature>
<feature type="splice variant" id="VSP_011622" description="In isoform 2." evidence="9 10 11">
    <location>
        <begin position="1"/>
        <end position="54"/>
    </location>
</feature>
<feature type="splice variant" id="VSP_011623" description="In isoform 2." evidence="9 10 11">
    <original>LTPGPHWDFTLKRKRREKDDDAVSLSSLDLK</original>
    <variation>MVAHDEIGGLLPIKRTIRVLDVNNQPFREQE</variation>
    <location>
        <begin position="55"/>
        <end position="85"/>
    </location>
</feature>
<feature type="mutagenesis site" description="Leads to cytoplasmic relocalization; when associated with 67-A--A-70." evidence="6">
    <original>RPRRR</original>
    <variation>APAAA</variation>
    <location>
        <begin position="12"/>
        <end position="16"/>
    </location>
</feature>
<feature type="mutagenesis site" description="Leads to cytoplasmic relocalization; when associated with 12-A--A-16." evidence="6">
    <original>RKRR</original>
    <variation>AAAA</variation>
    <location>
        <begin position="67"/>
        <end position="70"/>
    </location>
</feature>
<feature type="mutagenesis site" description="Inhibits transformation by N-terminal truncated form." evidence="8">
    <original>L</original>
    <variation>E</variation>
    <location>
        <position position="321"/>
    </location>
</feature>
<feature type="mutagenesis site" description="Inhibits transformation by N-terminal truncated form." evidence="8">
    <original>W</original>
    <variation>L</variation>
    <location>
        <position position="492"/>
    </location>
</feature>
<feature type="sequence conflict" description="In Ref. 3; BAC38417." evidence="12" ref="3">
    <original>F</original>
    <variation>S</variation>
    <location>
        <position position="116"/>
    </location>
</feature>
<feature type="sequence conflict" description="In Ref. 1; AAC71772." evidence="12" ref="1">
    <original>L</original>
    <variation>W</variation>
    <location>
        <position position="412"/>
    </location>
</feature>
<feature type="sequence conflict" description="In Ref. 1; AAC71772." evidence="12" ref="1">
    <original>R</original>
    <variation>G</variation>
    <location>
        <position position="418"/>
    </location>
</feature>
<feature type="sequence conflict" description="In Ref. 1; AAC71772." evidence="12" ref="1">
    <original>P</original>
    <variation>L</variation>
    <location>
        <position position="473"/>
    </location>
</feature>
<feature type="sequence conflict" description="In Ref. 1; AAC71772." evidence="12" ref="1">
    <original>RD</original>
    <variation>SH</variation>
    <location>
        <begin position="581"/>
        <end position="582"/>
    </location>
</feature>
<name>ARHG8_MOUSE</name>
<protein>
    <recommendedName>
        <fullName>Neuroepithelial cell-transforming gene 1 protein</fullName>
    </recommendedName>
    <alternativeName>
        <fullName>Rho guanine nucleotide exchange factor 8</fullName>
    </alternativeName>
</protein>
<proteinExistence type="evidence at protein level"/>
<keyword id="KW-0007">Acetylation</keyword>
<keyword id="KW-0025">Alternative splicing</keyword>
<keyword id="KW-0963">Cytoplasm</keyword>
<keyword id="KW-0344">Guanine-nucleotide releasing factor</keyword>
<keyword id="KW-0539">Nucleus</keyword>
<keyword id="KW-0597">Phosphoprotein</keyword>
<keyword id="KW-0656">Proto-oncogene</keyword>
<keyword id="KW-1185">Reference proteome</keyword>
<gene>
    <name type="primary">Net1</name>
    <name type="synonym">Arhgef8</name>
</gene>
<sequence>MEPEPAAQKQPRPRRRSRRVSMLSEEPAAGLPADTPGPAANERCSLRRGSSFTFLTPGPHWDFTLKRKRREKDDDAVSLSSLDLKEPSNKRVRPLARVTSLANLISPVRNGAVRRFGQTIQSFTLRGDHRSPASAQKSFSRSTVPTPTKRRSSALWSEMLDINMKESLTTREIKRQEAIYELSRGEQDLIEDLKLARKAYHDPMLKLSIMSEEELTHIFGDLDAYIPLHEDLLARIGEATKPDGTVEQIGHILVNWLPGLNAYRGYCSNQLAAKALLDQKKQDPRVQDFLQRCLESPFSRKLDLWSFLDIPRSRLVKYPLLLKEILRHTPKDHRDVQLLEEAILIIQGVLSDINLKKGESECQYYINKLEYLDEKQKDPRIEASKVLLCHGELKNKSGHKLYIFLFQDILVLTRPVTRNERHLYQVYRQPIPVQELVLEDLQDGDVRMGGSFRGAFGNSDKAKNIFRVRFQDPSPGHSHTLQANDVFHKQQWFNCIRAAIAPFQRAASPLELQGLPDLHEECEENNPSAGNLRAQRRSCVVPGVMQIDEESALDCGSSVQTVEDTRNMKAQRPQPGLRRARDKAQSGGKKKETLV</sequence>